<sequence>MSKRTFQPSNLKRKRSHGFRARMATVGGRKVLARRRAKGRARLSA</sequence>
<evidence type="ECO:0000255" key="1">
    <source>
        <dbReference type="HAMAP-Rule" id="MF_00391"/>
    </source>
</evidence>
<evidence type="ECO:0000256" key="2">
    <source>
        <dbReference type="SAM" id="MobiDB-lite"/>
    </source>
</evidence>
<evidence type="ECO:0000305" key="3"/>
<proteinExistence type="inferred from homology"/>
<name>RL34_SHEDO</name>
<feature type="chain" id="PRO_1000013440" description="Large ribosomal subunit protein bL34">
    <location>
        <begin position="1"/>
        <end position="45"/>
    </location>
</feature>
<feature type="region of interest" description="Disordered" evidence="2">
    <location>
        <begin position="1"/>
        <end position="21"/>
    </location>
</feature>
<feature type="compositionally biased region" description="Polar residues" evidence="2">
    <location>
        <begin position="1"/>
        <end position="10"/>
    </location>
</feature>
<feature type="compositionally biased region" description="Basic residues" evidence="2">
    <location>
        <begin position="11"/>
        <end position="20"/>
    </location>
</feature>
<dbReference type="EMBL" id="CP000302">
    <property type="protein sequence ID" value="ABE57051.1"/>
    <property type="molecule type" value="Genomic_DNA"/>
</dbReference>
<dbReference type="RefSeq" id="WP_006083827.1">
    <property type="nucleotide sequence ID" value="NC_007954.1"/>
</dbReference>
<dbReference type="SMR" id="Q12HM5"/>
<dbReference type="STRING" id="318161.Sden_3778"/>
<dbReference type="GeneID" id="90572020"/>
<dbReference type="KEGG" id="sdn:Sden_3778"/>
<dbReference type="eggNOG" id="COG0230">
    <property type="taxonomic scope" value="Bacteria"/>
</dbReference>
<dbReference type="HOGENOM" id="CLU_129938_2_0_6"/>
<dbReference type="Proteomes" id="UP000001982">
    <property type="component" value="Chromosome"/>
</dbReference>
<dbReference type="GO" id="GO:1990904">
    <property type="term" value="C:ribonucleoprotein complex"/>
    <property type="evidence" value="ECO:0007669"/>
    <property type="project" value="UniProtKB-KW"/>
</dbReference>
<dbReference type="GO" id="GO:0005840">
    <property type="term" value="C:ribosome"/>
    <property type="evidence" value="ECO:0007669"/>
    <property type="project" value="UniProtKB-KW"/>
</dbReference>
<dbReference type="GO" id="GO:0003735">
    <property type="term" value="F:structural constituent of ribosome"/>
    <property type="evidence" value="ECO:0007669"/>
    <property type="project" value="InterPro"/>
</dbReference>
<dbReference type="GO" id="GO:0006412">
    <property type="term" value="P:translation"/>
    <property type="evidence" value="ECO:0007669"/>
    <property type="project" value="UniProtKB-UniRule"/>
</dbReference>
<dbReference type="FunFam" id="1.10.287.3980:FF:000001">
    <property type="entry name" value="Mitochondrial ribosomal protein L34"/>
    <property type="match status" value="1"/>
</dbReference>
<dbReference type="Gene3D" id="1.10.287.3980">
    <property type="match status" value="1"/>
</dbReference>
<dbReference type="HAMAP" id="MF_00391">
    <property type="entry name" value="Ribosomal_bL34"/>
    <property type="match status" value="1"/>
</dbReference>
<dbReference type="InterPro" id="IPR000271">
    <property type="entry name" value="Ribosomal_bL34"/>
</dbReference>
<dbReference type="InterPro" id="IPR020939">
    <property type="entry name" value="Ribosomal_bL34_CS"/>
</dbReference>
<dbReference type="NCBIfam" id="TIGR01030">
    <property type="entry name" value="rpmH_bact"/>
    <property type="match status" value="1"/>
</dbReference>
<dbReference type="PANTHER" id="PTHR14503:SF4">
    <property type="entry name" value="LARGE RIBOSOMAL SUBUNIT PROTEIN BL34M"/>
    <property type="match status" value="1"/>
</dbReference>
<dbReference type="PANTHER" id="PTHR14503">
    <property type="entry name" value="MITOCHONDRIAL RIBOSOMAL PROTEIN 34 FAMILY MEMBER"/>
    <property type="match status" value="1"/>
</dbReference>
<dbReference type="Pfam" id="PF00468">
    <property type="entry name" value="Ribosomal_L34"/>
    <property type="match status" value="1"/>
</dbReference>
<dbReference type="PROSITE" id="PS00784">
    <property type="entry name" value="RIBOSOMAL_L34"/>
    <property type="match status" value="1"/>
</dbReference>
<protein>
    <recommendedName>
        <fullName evidence="1">Large ribosomal subunit protein bL34</fullName>
    </recommendedName>
    <alternativeName>
        <fullName evidence="3">50S ribosomal protein L34</fullName>
    </alternativeName>
</protein>
<reference key="1">
    <citation type="submission" date="2006-03" db="EMBL/GenBank/DDBJ databases">
        <title>Complete sequence of Shewanella denitrificans OS217.</title>
        <authorList>
            <consortium name="US DOE Joint Genome Institute"/>
            <person name="Copeland A."/>
            <person name="Lucas S."/>
            <person name="Lapidus A."/>
            <person name="Barry K."/>
            <person name="Detter J.C."/>
            <person name="Glavina del Rio T."/>
            <person name="Hammon N."/>
            <person name="Israni S."/>
            <person name="Dalin E."/>
            <person name="Tice H."/>
            <person name="Pitluck S."/>
            <person name="Brettin T."/>
            <person name="Bruce D."/>
            <person name="Han C."/>
            <person name="Tapia R."/>
            <person name="Gilna P."/>
            <person name="Kiss H."/>
            <person name="Schmutz J."/>
            <person name="Larimer F."/>
            <person name="Land M."/>
            <person name="Hauser L."/>
            <person name="Kyrpides N."/>
            <person name="Lykidis A."/>
            <person name="Richardson P."/>
        </authorList>
    </citation>
    <scope>NUCLEOTIDE SEQUENCE [LARGE SCALE GENOMIC DNA]</scope>
    <source>
        <strain>OS217 / ATCC BAA-1090 / DSM 15013</strain>
    </source>
</reference>
<gene>
    <name evidence="1" type="primary">rpmH</name>
    <name type="ordered locus">Sden_3778</name>
</gene>
<accession>Q12HM5</accession>
<keyword id="KW-1185">Reference proteome</keyword>
<keyword id="KW-0687">Ribonucleoprotein</keyword>
<keyword id="KW-0689">Ribosomal protein</keyword>
<organism>
    <name type="scientific">Shewanella denitrificans (strain OS217 / ATCC BAA-1090 / DSM 15013)</name>
    <dbReference type="NCBI Taxonomy" id="318161"/>
    <lineage>
        <taxon>Bacteria</taxon>
        <taxon>Pseudomonadati</taxon>
        <taxon>Pseudomonadota</taxon>
        <taxon>Gammaproteobacteria</taxon>
        <taxon>Alteromonadales</taxon>
        <taxon>Shewanellaceae</taxon>
        <taxon>Shewanella</taxon>
    </lineage>
</organism>
<comment type="similarity">
    <text evidence="1">Belongs to the bacterial ribosomal protein bL34 family.</text>
</comment>